<dbReference type="EMBL" id="X04465">
    <property type="protein sequence ID" value="CAA28141.1"/>
    <property type="molecule type" value="Genomic_DNA"/>
</dbReference>
<dbReference type="PIR" id="A02736">
    <property type="entry name" value="R3LV15"/>
</dbReference>
<dbReference type="RefSeq" id="NP_039355.1">
    <property type="nucleotide sequence ID" value="NC_001319.1"/>
</dbReference>
<dbReference type="SMR" id="P06372"/>
<dbReference type="GeneID" id="2702581"/>
<dbReference type="GO" id="GO:0009507">
    <property type="term" value="C:chloroplast"/>
    <property type="evidence" value="ECO:0007669"/>
    <property type="project" value="UniProtKB-SubCell"/>
</dbReference>
<dbReference type="GO" id="GO:1990904">
    <property type="term" value="C:ribonucleoprotein complex"/>
    <property type="evidence" value="ECO:0007669"/>
    <property type="project" value="UniProtKB-KW"/>
</dbReference>
<dbReference type="GO" id="GO:0005840">
    <property type="term" value="C:ribosome"/>
    <property type="evidence" value="ECO:0007669"/>
    <property type="project" value="UniProtKB-KW"/>
</dbReference>
<dbReference type="GO" id="GO:0003735">
    <property type="term" value="F:structural constituent of ribosome"/>
    <property type="evidence" value="ECO:0007669"/>
    <property type="project" value="InterPro"/>
</dbReference>
<dbReference type="GO" id="GO:0006412">
    <property type="term" value="P:translation"/>
    <property type="evidence" value="ECO:0007669"/>
    <property type="project" value="UniProtKB-UniRule"/>
</dbReference>
<dbReference type="CDD" id="cd00677">
    <property type="entry name" value="S15_NS1_EPRS_RNA-bind"/>
    <property type="match status" value="1"/>
</dbReference>
<dbReference type="Gene3D" id="1.10.287.10">
    <property type="entry name" value="S15/NS1, RNA-binding"/>
    <property type="match status" value="1"/>
</dbReference>
<dbReference type="HAMAP" id="MF_01343_B">
    <property type="entry name" value="Ribosomal_uS15_B"/>
    <property type="match status" value="1"/>
</dbReference>
<dbReference type="InterPro" id="IPR000589">
    <property type="entry name" value="Ribosomal_uS15"/>
</dbReference>
<dbReference type="InterPro" id="IPR005290">
    <property type="entry name" value="Ribosomal_uS15_bac-type"/>
</dbReference>
<dbReference type="InterPro" id="IPR009068">
    <property type="entry name" value="uS15_NS1_RNA-bd_sf"/>
</dbReference>
<dbReference type="NCBIfam" id="TIGR00952">
    <property type="entry name" value="S15_bact"/>
    <property type="match status" value="1"/>
</dbReference>
<dbReference type="PANTHER" id="PTHR23321">
    <property type="entry name" value="RIBOSOMAL PROTEIN S15, BACTERIAL AND ORGANELLAR"/>
    <property type="match status" value="1"/>
</dbReference>
<dbReference type="PANTHER" id="PTHR23321:SF26">
    <property type="entry name" value="SMALL RIBOSOMAL SUBUNIT PROTEIN US15M"/>
    <property type="match status" value="1"/>
</dbReference>
<dbReference type="Pfam" id="PF00312">
    <property type="entry name" value="Ribosomal_S15"/>
    <property type="match status" value="1"/>
</dbReference>
<dbReference type="SMART" id="SM01387">
    <property type="entry name" value="Ribosomal_S15"/>
    <property type="match status" value="1"/>
</dbReference>
<dbReference type="SUPFAM" id="SSF47060">
    <property type="entry name" value="S15/NS1 RNA-binding domain"/>
    <property type="match status" value="1"/>
</dbReference>
<dbReference type="PROSITE" id="PS00362">
    <property type="entry name" value="RIBOSOMAL_S15"/>
    <property type="match status" value="1"/>
</dbReference>
<evidence type="ECO:0000250" key="1"/>
<evidence type="ECO:0000305" key="2"/>
<organism>
    <name type="scientific">Marchantia polymorpha</name>
    <name type="common">Common liverwort</name>
    <name type="synonym">Marchantia aquatica</name>
    <dbReference type="NCBI Taxonomy" id="3197"/>
    <lineage>
        <taxon>Eukaryota</taxon>
        <taxon>Viridiplantae</taxon>
        <taxon>Streptophyta</taxon>
        <taxon>Embryophyta</taxon>
        <taxon>Marchantiophyta</taxon>
        <taxon>Marchantiopsida</taxon>
        <taxon>Marchantiidae</taxon>
        <taxon>Marchantiales</taxon>
        <taxon>Marchantiaceae</taxon>
        <taxon>Marchantia</taxon>
    </lineage>
</organism>
<reference key="1">
    <citation type="journal article" date="1986" name="Nature">
        <title>Chloroplast gene organization deduced from complete sequence of liverwort Marchantia polymorpha chloroplast DNA.</title>
        <authorList>
            <person name="Ohyama K."/>
            <person name="Fukuzawa H."/>
            <person name="Kohchi T."/>
            <person name="Shirai H."/>
            <person name="Sano T."/>
            <person name="Sano S."/>
            <person name="Umesono K."/>
            <person name="Shiki Y."/>
            <person name="Takeuchi M."/>
            <person name="Chang Z."/>
            <person name="Aota S."/>
            <person name="Inokuchi H."/>
            <person name="Ozeki H."/>
        </authorList>
    </citation>
    <scope>NUCLEOTIDE SEQUENCE [LARGE SCALE GENOMIC DNA]</scope>
</reference>
<reference key="2">
    <citation type="journal article" date="1988" name="J. Mol. Biol.">
        <title>Structure and organization of Marchantia polymorpha chloroplast genome. IV. Inverted repeat and small single copy regions.</title>
        <authorList>
            <person name="Kohchi T."/>
            <person name="Shirai H."/>
            <person name="Fukuzawa H."/>
            <person name="Sano T."/>
            <person name="Komano T."/>
            <person name="Umesono K."/>
            <person name="Inokuchi H."/>
            <person name="Ozeki H."/>
            <person name="Ohyama K."/>
        </authorList>
    </citation>
    <scope>NUCLEOTIDE SEQUENCE [GENOMIC DNA]</scope>
</reference>
<protein>
    <recommendedName>
        <fullName evidence="2">Small ribosomal subunit protein uS15c</fullName>
    </recommendedName>
    <alternativeName>
        <fullName>30S ribosomal protein S15, chloroplastic</fullName>
    </alternativeName>
</protein>
<keyword id="KW-0150">Chloroplast</keyword>
<keyword id="KW-0934">Plastid</keyword>
<keyword id="KW-0687">Ribonucleoprotein</keyword>
<keyword id="KW-0689">Ribosomal protein</keyword>
<sequence length="88" mass="10428">MSKNLFMDLSSISEKEKGSVEFQIFRLTNRVVKLTYHFKKHGKDYSSQRGLWKILGKRKRLLAYLFKTNFVSYENLIIQLGIRGLKKN</sequence>
<accession>P06372</accession>
<name>RR15_MARPO</name>
<geneLocation type="chloroplast"/>
<gene>
    <name type="primary">rps15</name>
</gene>
<feature type="chain" id="PRO_0000115635" description="Small ribosomal subunit protein uS15c">
    <location>
        <begin position="1"/>
        <end position="88"/>
    </location>
</feature>
<comment type="subunit">
    <text evidence="1">Part of the 30S ribosomal subunit.</text>
</comment>
<comment type="subcellular location">
    <subcellularLocation>
        <location>Plastid</location>
        <location>Chloroplast</location>
    </subcellularLocation>
</comment>
<comment type="similarity">
    <text evidence="2">Belongs to the universal ribosomal protein uS15 family.</text>
</comment>
<proteinExistence type="inferred from homology"/>